<feature type="chain" id="PRO_0000300561" description="p-hydroxybenzoic acid efflux pump subunit AaeA">
    <location>
        <begin position="1"/>
        <end position="311"/>
    </location>
</feature>
<feature type="transmembrane region" description="Helical" evidence="1">
    <location>
        <begin position="11"/>
        <end position="31"/>
    </location>
</feature>
<sequence>MSTFSLKIIRVGITVLVVVLAVIAIFNVWAFYTESPWTRDAKFTADVVAIAPDVSGLLTEVPVKDNQLVQKGQILFVIDQPRYQQALAEAEADVAYYQTLAAEKQRESSRRHRLGIQALSQEEIDQASNVLQTVQHQLAKAIAVRDLARLDLERTTVRAPAEGWVTNLNVHAGEFINRGATAVALVKKDTFYILAYLEETKLEGVKPGYRAEITPLGSNRILHGTVDSISAGVTNSSSSADSKGLATIDNNLEWVRLAQRVPVKIHLDSEDQQYLYPAGTTATVVITGPNDRDPHQASPMTKLMHRLREFG</sequence>
<dbReference type="EMBL" id="CP000668">
    <property type="protein sequence ID" value="ABP38711.1"/>
    <property type="molecule type" value="Genomic_DNA"/>
</dbReference>
<dbReference type="RefSeq" id="WP_002210094.1">
    <property type="nucleotide sequence ID" value="NZ_CP009715.1"/>
</dbReference>
<dbReference type="SMR" id="A4THE9"/>
<dbReference type="GeneID" id="57975110"/>
<dbReference type="KEGG" id="ypp:YPDSF_0292"/>
<dbReference type="PATRIC" id="fig|386656.14.peg.1591"/>
<dbReference type="GO" id="GO:0005886">
    <property type="term" value="C:plasma membrane"/>
    <property type="evidence" value="ECO:0007669"/>
    <property type="project" value="UniProtKB-SubCell"/>
</dbReference>
<dbReference type="GO" id="GO:0022857">
    <property type="term" value="F:transmembrane transporter activity"/>
    <property type="evidence" value="ECO:0007669"/>
    <property type="project" value="UniProtKB-UniRule"/>
</dbReference>
<dbReference type="Gene3D" id="2.40.30.170">
    <property type="match status" value="1"/>
</dbReference>
<dbReference type="Gene3D" id="2.40.50.100">
    <property type="match status" value="1"/>
</dbReference>
<dbReference type="HAMAP" id="MF_01544">
    <property type="entry name" value="AaeA"/>
    <property type="match status" value="1"/>
</dbReference>
<dbReference type="InterPro" id="IPR043602">
    <property type="entry name" value="CusB-like_dom_1"/>
</dbReference>
<dbReference type="InterPro" id="IPR032317">
    <property type="entry name" value="CusB_D23"/>
</dbReference>
<dbReference type="InterPro" id="IPR050393">
    <property type="entry name" value="MFP_Efflux_Pump"/>
</dbReference>
<dbReference type="InterPro" id="IPR022871">
    <property type="entry name" value="PHBA_efflux_pump_AaeA"/>
</dbReference>
<dbReference type="InterPro" id="IPR006143">
    <property type="entry name" value="RND_pump_MFP"/>
</dbReference>
<dbReference type="NCBIfam" id="NF007850">
    <property type="entry name" value="PRK10559.1"/>
    <property type="match status" value="1"/>
</dbReference>
<dbReference type="NCBIfam" id="TIGR01730">
    <property type="entry name" value="RND_mfp"/>
    <property type="match status" value="1"/>
</dbReference>
<dbReference type="PANTHER" id="PTHR30367:SF12">
    <property type="entry name" value="P-HYDROXYBENZOIC ACID EFFLUX PUMP SUBUNIT AAEA"/>
    <property type="match status" value="1"/>
</dbReference>
<dbReference type="PANTHER" id="PTHR30367">
    <property type="entry name" value="P-HYDROXYBENZOIC ACID EFFLUX PUMP SUBUNIT AAEA-RELATED"/>
    <property type="match status" value="1"/>
</dbReference>
<dbReference type="Pfam" id="PF00529">
    <property type="entry name" value="CusB_dom_1"/>
    <property type="match status" value="1"/>
</dbReference>
<dbReference type="Pfam" id="PF16576">
    <property type="entry name" value="HlyD_D23"/>
    <property type="match status" value="1"/>
</dbReference>
<dbReference type="SUPFAM" id="SSF111369">
    <property type="entry name" value="HlyD-like secretion proteins"/>
    <property type="match status" value="1"/>
</dbReference>
<comment type="function">
    <text evidence="1">Forms an efflux pump with AaeB.</text>
</comment>
<comment type="subcellular location">
    <subcellularLocation>
        <location evidence="1">Cell inner membrane</location>
        <topology evidence="1">Single-pass membrane protein</topology>
    </subcellularLocation>
</comment>
<comment type="similarity">
    <text evidence="1">Belongs to the membrane fusion protein (MFP) (TC 8.A.1) family.</text>
</comment>
<organism>
    <name type="scientific">Yersinia pestis (strain Pestoides F)</name>
    <dbReference type="NCBI Taxonomy" id="386656"/>
    <lineage>
        <taxon>Bacteria</taxon>
        <taxon>Pseudomonadati</taxon>
        <taxon>Pseudomonadota</taxon>
        <taxon>Gammaproteobacteria</taxon>
        <taxon>Enterobacterales</taxon>
        <taxon>Yersiniaceae</taxon>
        <taxon>Yersinia</taxon>
    </lineage>
</organism>
<reference key="1">
    <citation type="submission" date="2007-02" db="EMBL/GenBank/DDBJ databases">
        <title>Complete sequence of chromosome of Yersinia pestis Pestoides F.</title>
        <authorList>
            <consortium name="US DOE Joint Genome Institute"/>
            <person name="Copeland A."/>
            <person name="Lucas S."/>
            <person name="Lapidus A."/>
            <person name="Barry K."/>
            <person name="Detter J.C."/>
            <person name="Glavina del Rio T."/>
            <person name="Hammon N."/>
            <person name="Israni S."/>
            <person name="Dalin E."/>
            <person name="Tice H."/>
            <person name="Pitluck S."/>
            <person name="Di Bartolo G."/>
            <person name="Chain P."/>
            <person name="Malfatti S."/>
            <person name="Shin M."/>
            <person name="Vergez L."/>
            <person name="Schmutz J."/>
            <person name="Larimer F."/>
            <person name="Land M."/>
            <person name="Hauser L."/>
            <person name="Worsham P."/>
            <person name="Chu M."/>
            <person name="Bearden S."/>
            <person name="Garcia E."/>
            <person name="Richardson P."/>
        </authorList>
    </citation>
    <scope>NUCLEOTIDE SEQUENCE [LARGE SCALE GENOMIC DNA]</scope>
    <source>
        <strain>Pestoides F</strain>
    </source>
</reference>
<evidence type="ECO:0000255" key="1">
    <source>
        <dbReference type="HAMAP-Rule" id="MF_01544"/>
    </source>
</evidence>
<keyword id="KW-0997">Cell inner membrane</keyword>
<keyword id="KW-1003">Cell membrane</keyword>
<keyword id="KW-0472">Membrane</keyword>
<keyword id="KW-0812">Transmembrane</keyword>
<keyword id="KW-1133">Transmembrane helix</keyword>
<keyword id="KW-0813">Transport</keyword>
<proteinExistence type="inferred from homology"/>
<protein>
    <recommendedName>
        <fullName evidence="1">p-hydroxybenzoic acid efflux pump subunit AaeA</fullName>
        <shortName evidence="1">pHBA efflux pump protein A</shortName>
    </recommendedName>
</protein>
<accession>A4THE9</accession>
<name>AAEA_YERPP</name>
<gene>
    <name evidence="1" type="primary">aaeA</name>
    <name type="ordered locus">YPDSF_0292</name>
</gene>